<sequence>MSFRFNEAVFGDNSFNERIREKLSTALNSPSKKKLDILKSGIKVQKVDFPTIPQLEILDLDIITQPKSLAKGICKISCKDAMLRIQTVIESNLLLINEQDTPSFTMPQLINNGSFTIPITMTFSSIELEAITNIFVKNPGIGISFNDVDLDFKFDCSVKILQSTIERRLKESMHVVFKDVLPSLIFNTSQNWFTNRGESTSTIPGKREHHHQQTTMSRNVILDGSDFQELSPINMLRLSSIVSSRSTLSLHSTVMNSLSAIPGCLERQNLYRFISRMPSLNNYYSSQSFPQPKSSTVSSKQLVKPFYCSHNLLPKTVLDSSQYDLATITKIQSRLFDRSNSNDDNAKPRRRKIKCKKTRTPSNLQSQGEQAVDDSTAIETVTSTPVQTPIPELEEQSPPYLKTTVSIRDKYVIPEKISLNLDSKKDTSKKKPFYFIGLNSQEPSNNWKWGMEDSPPPYH</sequence>
<keyword id="KW-0445">Lipid transport</keyword>
<keyword id="KW-0446">Lipid-binding</keyword>
<keyword id="KW-0472">Membrane</keyword>
<keyword id="KW-0496">Mitochondrion</keyword>
<keyword id="KW-1000">Mitochondrion outer membrane</keyword>
<keyword id="KW-1185">Reference proteome</keyword>
<keyword id="KW-0812">Transmembrane</keyword>
<keyword id="KW-1134">Transmembrane beta strand</keyword>
<keyword id="KW-0813">Transport</keyword>
<keyword id="KW-0832">Ubl conjugation</keyword>
<organism>
    <name type="scientific">Saccharomyces cerevisiae (strain ATCC 204508 / S288c)</name>
    <name type="common">Baker's yeast</name>
    <dbReference type="NCBI Taxonomy" id="559292"/>
    <lineage>
        <taxon>Eukaryota</taxon>
        <taxon>Fungi</taxon>
        <taxon>Dikarya</taxon>
        <taxon>Ascomycota</taxon>
        <taxon>Saccharomycotina</taxon>
        <taxon>Saccharomycetes</taxon>
        <taxon>Saccharomycetales</taxon>
        <taxon>Saccharomycetaceae</taxon>
        <taxon>Saccharomyces</taxon>
    </lineage>
</organism>
<reference key="1">
    <citation type="journal article" date="1997" name="Yeast">
        <title>Sequence analysis of 203 kilobases from Saccharomyces cerevisiae chromosome VII.</title>
        <authorList>
            <person name="Rieger M."/>
            <person name="Brueckner M."/>
            <person name="Schaefer M."/>
            <person name="Mueller-Auer S."/>
        </authorList>
    </citation>
    <scope>NUCLEOTIDE SEQUENCE [GENOMIC DNA]</scope>
    <source>
        <strain>ATCC 204508 / S288c</strain>
    </source>
</reference>
<reference key="2">
    <citation type="journal article" date="1997" name="Nature">
        <title>The nucleotide sequence of Saccharomyces cerevisiae chromosome VII.</title>
        <authorList>
            <person name="Tettelin H."/>
            <person name="Agostoni-Carbone M.L."/>
            <person name="Albermann K."/>
            <person name="Albers M."/>
            <person name="Arroyo J."/>
            <person name="Backes U."/>
            <person name="Barreiros T."/>
            <person name="Bertani I."/>
            <person name="Bjourson A.J."/>
            <person name="Brueckner M."/>
            <person name="Bruschi C.V."/>
            <person name="Carignani G."/>
            <person name="Castagnoli L."/>
            <person name="Cerdan E."/>
            <person name="Clemente M.L."/>
            <person name="Coblenz A."/>
            <person name="Coglievina M."/>
            <person name="Coissac E."/>
            <person name="Defoor E."/>
            <person name="Del Bino S."/>
            <person name="Delius H."/>
            <person name="Delneri D."/>
            <person name="de Wergifosse P."/>
            <person name="Dujon B."/>
            <person name="Durand P."/>
            <person name="Entian K.-D."/>
            <person name="Eraso P."/>
            <person name="Escribano V."/>
            <person name="Fabiani L."/>
            <person name="Fartmann B."/>
            <person name="Feroli F."/>
            <person name="Feuermann M."/>
            <person name="Frontali L."/>
            <person name="Garcia-Gonzalez M."/>
            <person name="Garcia-Saez M.I."/>
            <person name="Goffeau A."/>
            <person name="Guerreiro P."/>
            <person name="Hani J."/>
            <person name="Hansen M."/>
            <person name="Hebling U."/>
            <person name="Hernandez K."/>
            <person name="Heumann K."/>
            <person name="Hilger F."/>
            <person name="Hofmann B."/>
            <person name="Indge K.J."/>
            <person name="James C.M."/>
            <person name="Klima R."/>
            <person name="Koetter P."/>
            <person name="Kramer B."/>
            <person name="Kramer W."/>
            <person name="Lauquin G."/>
            <person name="Leuther H."/>
            <person name="Louis E.J."/>
            <person name="Maillier E."/>
            <person name="Marconi A."/>
            <person name="Martegani E."/>
            <person name="Mazon M.J."/>
            <person name="Mazzoni C."/>
            <person name="McReynolds A.D.K."/>
            <person name="Melchioretto P."/>
            <person name="Mewes H.-W."/>
            <person name="Minenkova O."/>
            <person name="Mueller-Auer S."/>
            <person name="Nawrocki A."/>
            <person name="Netter P."/>
            <person name="Neu R."/>
            <person name="Nombela C."/>
            <person name="Oliver S.G."/>
            <person name="Panzeri L."/>
            <person name="Paoluzi S."/>
            <person name="Plevani P."/>
            <person name="Portetelle D."/>
            <person name="Portillo F."/>
            <person name="Potier S."/>
            <person name="Purnelle B."/>
            <person name="Rieger M."/>
            <person name="Riles L."/>
            <person name="Rinaldi T."/>
            <person name="Robben J."/>
            <person name="Rodrigues-Pousada C."/>
            <person name="Rodriguez-Belmonte E."/>
            <person name="Rodriguez-Torres A.M."/>
            <person name="Rose M."/>
            <person name="Ruzzi M."/>
            <person name="Saliola M."/>
            <person name="Sanchez-Perez M."/>
            <person name="Schaefer B."/>
            <person name="Schaefer M."/>
            <person name="Scharfe M."/>
            <person name="Schmidheini T."/>
            <person name="Schreer A."/>
            <person name="Skala J."/>
            <person name="Souciet J.-L."/>
            <person name="Steensma H.Y."/>
            <person name="Talla E."/>
            <person name="Thierry A."/>
            <person name="Vandenbol M."/>
            <person name="van der Aart Q.J.M."/>
            <person name="Van Dyck L."/>
            <person name="Vanoni M."/>
            <person name="Verhasselt P."/>
            <person name="Voet M."/>
            <person name="Volckaert G."/>
            <person name="Wambutt R."/>
            <person name="Watson M.D."/>
            <person name="Weber N."/>
            <person name="Wedler E."/>
            <person name="Wedler H."/>
            <person name="Wipfli P."/>
            <person name="Wolf K."/>
            <person name="Wright L.F."/>
            <person name="Zaccaria P."/>
            <person name="Zimmermann M."/>
            <person name="Zollner A."/>
            <person name="Kleine K."/>
        </authorList>
    </citation>
    <scope>NUCLEOTIDE SEQUENCE [LARGE SCALE GENOMIC DNA]</scope>
    <source>
        <strain>ATCC 204508 / S288c</strain>
    </source>
</reference>
<reference key="3">
    <citation type="journal article" date="2014" name="G3 (Bethesda)">
        <title>The reference genome sequence of Saccharomyces cerevisiae: Then and now.</title>
        <authorList>
            <person name="Engel S.R."/>
            <person name="Dietrich F.S."/>
            <person name="Fisk D.G."/>
            <person name="Binkley G."/>
            <person name="Balakrishnan R."/>
            <person name="Costanzo M.C."/>
            <person name="Dwight S.S."/>
            <person name="Hitz B.C."/>
            <person name="Karra K."/>
            <person name="Nash R.S."/>
            <person name="Weng S."/>
            <person name="Wong E.D."/>
            <person name="Lloyd P."/>
            <person name="Skrzypek M.S."/>
            <person name="Miyasato S.R."/>
            <person name="Simison M."/>
            <person name="Cherry J.M."/>
        </authorList>
    </citation>
    <scope>GENOME REANNOTATION</scope>
    <source>
        <strain>ATCC 204508 / S288c</strain>
    </source>
</reference>
<reference key="4">
    <citation type="journal article" date="2002" name="Mol. Biol. Cell">
        <title>Genetic basis of mitochondrial function and morphology in Saccharomyces cerevisiae.</title>
        <authorList>
            <person name="Dimmer K.S."/>
            <person name="Fritz S."/>
            <person name="Fuchs F."/>
            <person name="Messerschmitt M."/>
            <person name="Weinbach N."/>
            <person name="Neupert W."/>
            <person name="Westermann B."/>
        </authorList>
    </citation>
    <scope>FUNCTION</scope>
</reference>
<reference key="5">
    <citation type="journal article" date="2003" name="Nature">
        <title>Global analysis of protein localization in budding yeast.</title>
        <authorList>
            <person name="Huh W.-K."/>
            <person name="Falvo J.V."/>
            <person name="Gerke L.C."/>
            <person name="Carroll A.S."/>
            <person name="Howson R.W."/>
            <person name="Weissman J.S."/>
            <person name="O'Shea E.K."/>
        </authorList>
    </citation>
    <scope>SUBCELLULAR LOCATION [LARGE SCALE ANALYSIS]</scope>
</reference>
<reference key="6">
    <citation type="journal article" date="2003" name="Nature">
        <title>Global analysis of protein expression in yeast.</title>
        <authorList>
            <person name="Ghaemmaghami S."/>
            <person name="Huh W.-K."/>
            <person name="Bower K."/>
            <person name="Howson R.W."/>
            <person name="Belle A."/>
            <person name="Dephoure N."/>
            <person name="O'Shea E.K."/>
            <person name="Weissman J.S."/>
        </authorList>
    </citation>
    <scope>LEVEL OF PROTEIN EXPRESSION [LARGE SCALE ANALYSIS]</scope>
</reference>
<reference key="7">
    <citation type="journal article" date="2004" name="J. Cell Biol.">
        <title>Mmm2p, a mitochondrial outer membrane protein required for yeast mitochondrial shape and maintenance of mtDNA nucleoids.</title>
        <authorList>
            <person name="Youngman M.J."/>
            <person name="Hobbs A.E.A."/>
            <person name="Burgess S.M."/>
            <person name="Srinivasan M."/>
            <person name="Jensen R.E."/>
        </authorList>
    </citation>
    <scope>FUNCTION</scope>
    <scope>SUBCELLULAR LOCATION</scope>
</reference>
<reference key="8">
    <citation type="journal article" date="2006" name="J. Proteome Res.">
        <title>Toward the complete yeast mitochondrial proteome: multidimensional separation techniques for mitochondrial proteomics.</title>
        <authorList>
            <person name="Reinders J."/>
            <person name="Zahedi R.P."/>
            <person name="Pfanner N."/>
            <person name="Meisinger C."/>
            <person name="Sickmann A."/>
        </authorList>
    </citation>
    <scope>SUBCELLULAR LOCATION [LARGE SCALE ANALYSIS]</scope>
    <scope>IDENTIFICATION BY MASS SPECTROMETRY</scope>
</reference>
<reference key="9">
    <citation type="journal article" date="2006" name="Mol. Biol. Cell">
        <title>Proteomic analysis of the yeast mitochondrial outer membrane reveals accumulation of a subclass of preproteins.</title>
        <authorList>
            <person name="Zahedi R.P."/>
            <person name="Sickmann A."/>
            <person name="Boehm A.M."/>
            <person name="Winkler C."/>
            <person name="Zufall N."/>
            <person name="Schoenfisch B."/>
            <person name="Guiard B."/>
            <person name="Pfanner N."/>
            <person name="Meisinger C."/>
        </authorList>
    </citation>
    <scope>SUBCELLULAR LOCATION</scope>
    <scope>IDENTIFICATION BY MASS SPECTROMETRY</scope>
</reference>
<reference key="10">
    <citation type="journal article" date="2008" name="Genes Cells">
        <title>A proteomic screen reveals the mitochondrial outer membrane protein Mdm34p as an essential target of the F-box protein Mdm30p.</title>
        <authorList>
            <person name="Ota K."/>
            <person name="Kito K."/>
            <person name="Okada S."/>
            <person name="Ito T."/>
        </authorList>
    </citation>
    <scope>UBIQUITINATION</scope>
</reference>
<reference key="11">
    <citation type="journal article" date="2009" name="Science">
        <title>An ER-mitochondria tethering complex revealed by a synthetic biology screen.</title>
        <authorList>
            <person name="Kornmann B."/>
            <person name="Currie E."/>
            <person name="Collins S.R."/>
            <person name="Schuldiner M."/>
            <person name="Nunnari J."/>
            <person name="Weissman J.S."/>
            <person name="Walter P."/>
        </authorList>
    </citation>
    <scope>FUNCTION</scope>
    <scope>IDENTIFICATION IN ERMES/MDM COMPLEX</scope>
    <scope>SUBCELLULAR LOCATION</scope>
</reference>
<reference key="12">
    <citation type="journal article" date="2012" name="Proteomics">
        <title>Sites of ubiquitin attachment in Saccharomyces cerevisiae.</title>
        <authorList>
            <person name="Starita L.M."/>
            <person name="Lo R.S."/>
            <person name="Eng J.K."/>
            <person name="von Haller P.D."/>
            <person name="Fields S."/>
        </authorList>
    </citation>
    <scope>IDENTIFICATION BY MASS SPECTROMETRY [LARGE SCALE ANALYSIS]</scope>
</reference>
<reference key="13">
    <citation type="journal article" date="2016" name="Sci. Rep.">
        <title>A phospholipid transfer function of ER-mitochondria encounter structure revealed in vitro.</title>
        <authorList>
            <person name="Kojima R."/>
            <person name="Endo T."/>
            <person name="Tamura Y."/>
        </authorList>
    </citation>
    <scope>FUNCTION</scope>
</reference>
<accession>P53083</accession>
<accession>D6VTT9</accession>
<evidence type="ECO:0000255" key="1">
    <source>
        <dbReference type="HAMAP-Rule" id="MF_03105"/>
    </source>
</evidence>
<evidence type="ECO:0000256" key="2">
    <source>
        <dbReference type="SAM" id="MobiDB-lite"/>
    </source>
</evidence>
<evidence type="ECO:0000269" key="3">
    <source>
    </source>
</evidence>
<evidence type="ECO:0000269" key="4">
    <source>
    </source>
</evidence>
<evidence type="ECO:0000269" key="5">
    <source>
    </source>
</evidence>
<evidence type="ECO:0000269" key="6">
    <source>
    </source>
</evidence>
<evidence type="ECO:0000269" key="7">
    <source>
    </source>
</evidence>
<evidence type="ECO:0000269" key="8">
    <source>
    </source>
</evidence>
<evidence type="ECO:0000269" key="9">
    <source>
    </source>
</evidence>
<evidence type="ECO:0000269" key="10">
    <source>
    </source>
</evidence>
<evidence type="ECO:0000269" key="11">
    <source>
    </source>
</evidence>
<name>MDM34_YEAST</name>
<proteinExistence type="evidence at protein level"/>
<gene>
    <name evidence="1" type="primary">MDM34</name>
    <name evidence="1" type="synonym">MMM2</name>
    <name type="ordered locus">YGL219C</name>
</gene>
<dbReference type="EMBL" id="Z72741">
    <property type="protein sequence ID" value="CAA96934.1"/>
    <property type="molecule type" value="Genomic_DNA"/>
</dbReference>
<dbReference type="EMBL" id="BK006941">
    <property type="protein sequence ID" value="DAA07900.1"/>
    <property type="molecule type" value="Genomic_DNA"/>
</dbReference>
<dbReference type="PIR" id="S64241">
    <property type="entry name" value="S64241"/>
</dbReference>
<dbReference type="RefSeq" id="NP_011296.1">
    <property type="nucleotide sequence ID" value="NM_001181084.1"/>
</dbReference>
<dbReference type="BioGRID" id="33040">
    <property type="interactions" value="515"/>
</dbReference>
<dbReference type="ComplexPortal" id="CPX-3196">
    <property type="entry name" value="ERMES complex"/>
</dbReference>
<dbReference type="DIP" id="DIP-7932N"/>
<dbReference type="FunCoup" id="P53083">
    <property type="interactions" value="89"/>
</dbReference>
<dbReference type="IntAct" id="P53083">
    <property type="interactions" value="16"/>
</dbReference>
<dbReference type="STRING" id="4932.YGL219C"/>
<dbReference type="TCDB" id="9.A.58.1.1">
    <property type="family name" value="the maintenance of mitochondrial morphology (mmm) family"/>
</dbReference>
<dbReference type="iPTMnet" id="P53083"/>
<dbReference type="PaxDb" id="4932-YGL219C"/>
<dbReference type="PeptideAtlas" id="P53083"/>
<dbReference type="EnsemblFungi" id="YGL219C_mRNA">
    <property type="protein sequence ID" value="YGL219C"/>
    <property type="gene ID" value="YGL219C"/>
</dbReference>
<dbReference type="GeneID" id="852654"/>
<dbReference type="KEGG" id="sce:YGL219C"/>
<dbReference type="AGR" id="SGD:S000003187"/>
<dbReference type="SGD" id="S000003187">
    <property type="gene designation" value="MDM34"/>
</dbReference>
<dbReference type="VEuPathDB" id="FungiDB:YGL219C"/>
<dbReference type="eggNOG" id="ENOG502QT3W">
    <property type="taxonomic scope" value="Eukaryota"/>
</dbReference>
<dbReference type="HOGENOM" id="CLU_036329_0_0_1"/>
<dbReference type="InParanoid" id="P53083"/>
<dbReference type="OMA" id="PGCLERQ"/>
<dbReference type="OrthoDB" id="17927at2759"/>
<dbReference type="BioCyc" id="YEAST:G3O-30693-MONOMER"/>
<dbReference type="BioGRID-ORCS" id="852654">
    <property type="hits" value="0 hits in 10 CRISPR screens"/>
</dbReference>
<dbReference type="PRO" id="PR:P53083"/>
<dbReference type="Proteomes" id="UP000002311">
    <property type="component" value="Chromosome VII"/>
</dbReference>
<dbReference type="RNAct" id="P53083">
    <property type="molecule type" value="protein"/>
</dbReference>
<dbReference type="GO" id="GO:0005737">
    <property type="term" value="C:cytoplasm"/>
    <property type="evidence" value="ECO:0007005"/>
    <property type="project" value="SGD"/>
</dbReference>
<dbReference type="GO" id="GO:0032865">
    <property type="term" value="C:ERMES complex"/>
    <property type="evidence" value="ECO:0000353"/>
    <property type="project" value="ComplexPortal"/>
</dbReference>
<dbReference type="GO" id="GO:0044233">
    <property type="term" value="C:mitochondria-associated endoplasmic reticulum membrane contact site"/>
    <property type="evidence" value="ECO:0000314"/>
    <property type="project" value="SGD"/>
</dbReference>
<dbReference type="GO" id="GO:0005741">
    <property type="term" value="C:mitochondrial outer membrane"/>
    <property type="evidence" value="ECO:0000314"/>
    <property type="project" value="SGD"/>
</dbReference>
<dbReference type="GO" id="GO:0005739">
    <property type="term" value="C:mitochondrion"/>
    <property type="evidence" value="ECO:0000314"/>
    <property type="project" value="UniProtKB"/>
</dbReference>
<dbReference type="GO" id="GO:0098799">
    <property type="term" value="C:outer mitochondrial membrane protein complex"/>
    <property type="evidence" value="ECO:0000303"/>
    <property type="project" value="ComplexPortal"/>
</dbReference>
<dbReference type="GO" id="GO:0008289">
    <property type="term" value="F:lipid binding"/>
    <property type="evidence" value="ECO:0007669"/>
    <property type="project" value="UniProtKB-KW"/>
</dbReference>
<dbReference type="GO" id="GO:0000002">
    <property type="term" value="P:mitochondrial genome maintenance"/>
    <property type="evidence" value="ECO:0007669"/>
    <property type="project" value="UniProtKB-UniRule"/>
</dbReference>
<dbReference type="GO" id="GO:0007005">
    <property type="term" value="P:mitochondrion organization"/>
    <property type="evidence" value="ECO:0000315"/>
    <property type="project" value="SGD"/>
</dbReference>
<dbReference type="GO" id="GO:1990456">
    <property type="term" value="P:mitochondrion-endoplasmic reticulum membrane tethering"/>
    <property type="evidence" value="ECO:0000315"/>
    <property type="project" value="SGD"/>
</dbReference>
<dbReference type="GO" id="GO:0055091">
    <property type="term" value="P:phospholipid homeostasis"/>
    <property type="evidence" value="ECO:0000303"/>
    <property type="project" value="ComplexPortal"/>
</dbReference>
<dbReference type="GO" id="GO:0015914">
    <property type="term" value="P:phospholipid transport"/>
    <property type="evidence" value="ECO:0000316"/>
    <property type="project" value="SGD"/>
</dbReference>
<dbReference type="CDD" id="cd21673">
    <property type="entry name" value="SMP_Mdm34"/>
    <property type="match status" value="1"/>
</dbReference>
<dbReference type="HAMAP" id="MF_03105">
    <property type="entry name" value="Mdm34"/>
    <property type="match status" value="1"/>
</dbReference>
<dbReference type="InterPro" id="IPR027536">
    <property type="entry name" value="Mdm34"/>
</dbReference>
<dbReference type="InterPro" id="IPR031468">
    <property type="entry name" value="SMP_LBD"/>
</dbReference>
<dbReference type="PANTHER" id="PTHR28185">
    <property type="entry name" value="MITOCHONDRIAL DISTRIBUTION AND MORPHOLOGY PROTEIN 34"/>
    <property type="match status" value="1"/>
</dbReference>
<dbReference type="PANTHER" id="PTHR28185:SF1">
    <property type="entry name" value="MITOCHONDRIAL DISTRIBUTION AND MORPHOLOGY PROTEIN 34"/>
    <property type="match status" value="1"/>
</dbReference>
<dbReference type="PROSITE" id="PS51847">
    <property type="entry name" value="SMP"/>
    <property type="match status" value="1"/>
</dbReference>
<protein>
    <recommendedName>
        <fullName evidence="1">Mitochondrial distribution and morphology protein 34</fullName>
    </recommendedName>
    <alternativeName>
        <fullName evidence="1">Mitochondrial outer membrane protein MMM2</fullName>
    </alternativeName>
</protein>
<feature type="chain" id="PRO_0000096331" description="Mitochondrial distribution and morphology protein 34">
    <location>
        <begin position="1"/>
        <end position="459"/>
    </location>
</feature>
<feature type="domain" description="SMP-LTD" evidence="1">
    <location>
        <begin position="1"/>
        <end position="190"/>
    </location>
</feature>
<feature type="region of interest" description="Disordered" evidence="2">
    <location>
        <begin position="338"/>
        <end position="375"/>
    </location>
</feature>
<feature type="compositionally biased region" description="Basic and acidic residues" evidence="2">
    <location>
        <begin position="338"/>
        <end position="347"/>
    </location>
</feature>
<feature type="compositionally biased region" description="Basic residues" evidence="2">
    <location>
        <begin position="348"/>
        <end position="359"/>
    </location>
</feature>
<comment type="function">
    <text evidence="1 3 6 10 11">Component of the ERMES/MDM complex, which serves as a molecular tether to connect the endoplasmic reticulum (ER) and mitochondria (PubMed:11907266, PubMed:14981098). Components of this complex are involved in the control of mitochondrial shape and protein biogenesis, and function in nonvesicular lipid trafficking between the ER and mitochondria (PubMed:27469264). MDM34 is required for the interaction of the ER-resident membrane protein MMM1 and the outer mitochondrial membrane-resident beta-barrel protein MDM10 (By similarity) (PubMed:19556461).</text>
</comment>
<comment type="subunit">
    <text evidence="1 10">Component of the ER-mitochondria encounter structure (ERMES) or MDM complex, composed of MMM1, MDM10, MDM12 and MDM34.</text>
</comment>
<comment type="subcellular location">
    <subcellularLocation>
        <location evidence="1 4 6 7 8 10">Mitochondrion outer membrane</location>
        <topology evidence="1 4 6 7 8 10">Multi-pass membrane protein</topology>
    </subcellularLocation>
    <text evidence="1">The ERMES/MDM complex localizes to a few discrete foci (around 10 per single cell), that represent mitochondria-endoplasmic reticulum junctions. These foci are often found next to mtDNA nucleoids.</text>
</comment>
<comment type="domain">
    <text evidence="1">Lacks alpha-helical transmembrane segments, suggesting that it resides in the membrane via beta-sheet conformations similar to those predicted for other outer membrane proteins and porin.</text>
</comment>
<comment type="domain">
    <text evidence="1">The SMP-LTD domain is a barrel-like domain that can bind various types of glycerophospholipids in its interior and mediate their transfer between two adjacent bilayers.</text>
</comment>
<comment type="PTM">
    <text evidence="1 9">Ubiquitinated by a SCF (SKP1-CUL1-F-box protein) E3 ubiquitin-protein ligase complex containing the F-box protein MDM30. Ubiquitination is important for mitochondrial integrity.</text>
</comment>
<comment type="miscellaneous">
    <text evidence="5">Present with 377 molecules/cell in log phase SD medium.</text>
</comment>
<comment type="similarity">
    <text evidence="1">Belongs to the MDM34 family.</text>
</comment>